<protein>
    <recommendedName>
        <fullName>Alpha-1,3-galactosidase B</fullName>
        <ecNumber evidence="1">3.2.1.n1</ecNumber>
        <ecNumber evidence="1">3.2.1.n2</ecNumber>
    </recommendedName>
    <alternativeName>
        <fullName>Exo-alpha-galactosidase B</fullName>
        <ecNumber evidence="1">3.2.1.22</ecNumber>
    </alternativeName>
</protein>
<name>GLAB_AKKM8</name>
<comment type="function">
    <text evidence="1">Alpha-galactosidase. Removes both branched alpha-1,3-linked galactose residues of blood group B antigens and linear alpha-1,3-linked galactose structures.</text>
</comment>
<comment type="catalytic activity">
    <reaction evidence="1">
        <text>Hydrolysis of terminal, non-reducing branched (1-&gt;3)-alpha-D-galactosidic residues, producing free D-galactose.</text>
        <dbReference type="EC" id="3.2.1.n1"/>
    </reaction>
</comment>
<comment type="catalytic activity">
    <reaction evidence="1">
        <text>Hydrolysis of terminal, non-reducing linear (1-&gt;3)-alpha-D-galactosidic residues, producing free D-galactose.</text>
        <dbReference type="EC" id="3.2.1.n2"/>
    </reaction>
</comment>
<comment type="catalytic activity">
    <reaction evidence="1">
        <text>Hydrolysis of terminal, non-reducing alpha-D-galactose residues in alpha-D-galactosides, including galactose oligosaccharides, galactomannans and galactolipids.</text>
        <dbReference type="EC" id="3.2.1.22"/>
    </reaction>
</comment>
<comment type="similarity">
    <text evidence="3">Belongs to the glycosyl hydrolase 110 family. B subfamily.</text>
</comment>
<keyword id="KW-0002">3D-structure</keyword>
<keyword id="KW-0326">Glycosidase</keyword>
<keyword id="KW-0378">Hydrolase</keyword>
<keyword id="KW-1185">Reference proteome</keyword>
<keyword id="KW-0677">Repeat</keyword>
<keyword id="KW-0732">Signal</keyword>
<evidence type="ECO:0000250" key="1">
    <source>
        <dbReference type="UniProtKB" id="Q5LGZ8"/>
    </source>
</evidence>
<evidence type="ECO:0000255" key="2"/>
<evidence type="ECO:0000305" key="3"/>
<dbReference type="EC" id="3.2.1.n1" evidence="1"/>
<dbReference type="EC" id="3.2.1.n2" evidence="1"/>
<dbReference type="EC" id="3.2.1.22" evidence="1"/>
<dbReference type="EMBL" id="CP001071">
    <property type="protein sequence ID" value="ACD04318.1"/>
    <property type="molecule type" value="Genomic_DNA"/>
</dbReference>
<dbReference type="PDB" id="8PVS">
    <property type="method" value="X-ray"/>
    <property type="resolution" value="1.68 A"/>
    <property type="chains" value="A/B=64-794"/>
</dbReference>
<dbReference type="PDBsum" id="8PVS"/>
<dbReference type="SMR" id="B2UNU8"/>
<dbReference type="STRING" id="349741.Amuc_0480"/>
<dbReference type="CAZy" id="CBM51">
    <property type="family name" value="Carbohydrate-Binding Module Family 51"/>
</dbReference>
<dbReference type="CAZy" id="GH110">
    <property type="family name" value="Glycoside Hydrolase Family 110"/>
</dbReference>
<dbReference type="PaxDb" id="349741-Amuc_0480"/>
<dbReference type="KEGG" id="amu:Amuc_0480"/>
<dbReference type="eggNOG" id="COG5434">
    <property type="taxonomic scope" value="Bacteria"/>
</dbReference>
<dbReference type="HOGENOM" id="CLU_017693_0_0_0"/>
<dbReference type="BioCyc" id="AMUC349741:G1GBX-528-MONOMER"/>
<dbReference type="Proteomes" id="UP000001031">
    <property type="component" value="Chromosome"/>
</dbReference>
<dbReference type="GO" id="GO:0004557">
    <property type="term" value="F:alpha-galactosidase activity"/>
    <property type="evidence" value="ECO:0007669"/>
    <property type="project" value="UniProtKB-EC"/>
</dbReference>
<dbReference type="Gene3D" id="2.60.120.1060">
    <property type="entry name" value="NPCBM/NEW2 domain"/>
    <property type="match status" value="1"/>
</dbReference>
<dbReference type="Gene3D" id="2.160.20.10">
    <property type="entry name" value="Single-stranded right-handed beta-helix, Pectin lyase-like"/>
    <property type="match status" value="2"/>
</dbReference>
<dbReference type="InterPro" id="IPR056441">
    <property type="entry name" value="Beta-barrel_GLAA-B_II"/>
</dbReference>
<dbReference type="InterPro" id="IPR008979">
    <property type="entry name" value="Galactose-bd-like_sf"/>
</dbReference>
<dbReference type="InterPro" id="IPR013222">
    <property type="entry name" value="Glyco_hyd_98_carb-bd"/>
</dbReference>
<dbReference type="InterPro" id="IPR038637">
    <property type="entry name" value="NPCBM_sf"/>
</dbReference>
<dbReference type="InterPro" id="IPR012334">
    <property type="entry name" value="Pectin_lyas_fold"/>
</dbReference>
<dbReference type="InterPro" id="IPR011050">
    <property type="entry name" value="Pectin_lyase_fold/virulence"/>
</dbReference>
<dbReference type="Pfam" id="PF23763">
    <property type="entry name" value="Beta-barrel_GLAA-B_I"/>
    <property type="match status" value="1"/>
</dbReference>
<dbReference type="Pfam" id="PF23764">
    <property type="entry name" value="Beta-barrel_GLAA-B_II"/>
    <property type="match status" value="1"/>
</dbReference>
<dbReference type="Pfam" id="PF08305">
    <property type="entry name" value="NPCBM"/>
    <property type="match status" value="1"/>
</dbReference>
<dbReference type="SMART" id="SM00776">
    <property type="entry name" value="NPCBM"/>
    <property type="match status" value="1"/>
</dbReference>
<dbReference type="SUPFAM" id="SSF49785">
    <property type="entry name" value="Galactose-binding domain-like"/>
    <property type="match status" value="1"/>
</dbReference>
<dbReference type="SUPFAM" id="SSF51126">
    <property type="entry name" value="Pectin lyase-like"/>
    <property type="match status" value="1"/>
</dbReference>
<proteinExistence type="evidence at protein level"/>
<reference key="1">
    <citation type="journal article" date="2011" name="PLoS ONE">
        <title>The genome of Akkermansia muciniphila, a dedicated intestinal mucin degrader, and its use in exploring intestinal metagenomes.</title>
        <authorList>
            <person name="van Passel M.W."/>
            <person name="Kant R."/>
            <person name="Zoetendal E.G."/>
            <person name="Plugge C.M."/>
            <person name="Derrien M."/>
            <person name="Malfatti S.A."/>
            <person name="Chain P.S."/>
            <person name="Woyke T."/>
            <person name="Palva A."/>
            <person name="de Vos W.M."/>
            <person name="Smidt H."/>
        </authorList>
    </citation>
    <scope>NUCLEOTIDE SEQUENCE [LARGE SCALE GENOMIC DNA]</scope>
    <source>
        <strain>ATCC BAA-835 / DSM 22959 / JCM 33894 / BCRC 81048 / CCUG 64013 / CIP 107961 / Muc</strain>
    </source>
</reference>
<accession>B2UNU8</accession>
<feature type="signal peptide" evidence="2">
    <location>
        <begin position="1"/>
        <end position="57"/>
    </location>
</feature>
<feature type="chain" id="PRO_0000348475" description="Alpha-1,3-galactosidase B">
    <location>
        <begin position="58"/>
        <end position="794"/>
    </location>
</feature>
<feature type="repeat" description="PbH1 1">
    <location>
        <begin position="468"/>
        <end position="499"/>
    </location>
</feature>
<feature type="repeat" description="PbH1 2">
    <location>
        <begin position="609"/>
        <end position="631"/>
    </location>
</feature>
<feature type="repeat" description="PbH1 3">
    <location>
        <begin position="632"/>
        <end position="654"/>
    </location>
</feature>
<feature type="repeat" description="PbH1 4">
    <location>
        <begin position="665"/>
        <end position="686"/>
    </location>
</feature>
<feature type="repeat" description="PbH1 5">
    <location>
        <begin position="707"/>
        <end position="728"/>
    </location>
</feature>
<sequence>MEGNLSFSLMEASGRSIFFLIEGIREQSIKNMFSRMFSWSFVVAACLAGLFPAQSQGEEKAAQSGTIAVKVPASSLLMTRQETGETRLDRSFSNAGLSIGGKKYATGIGTHATSMIPLPVPENPKVLRLEGACGIDDGADGDGSVEFRVMSGSEVLWSSGVMRRGMAAKKFSIPVAENGIRHLYLMADRVDNNSYDHADWVDLAWKTTGSGQGMKGAVVNASEFGMVPGVRKDQGPALRAAVSALRRQGGGVLNIPRGIYHFYPEGALNMSFHISNHDQPLIHPVCVPLADLRNVRVEGNGSLFLFHGKVVPLLVMDSENVSINRLSVDYERSWCTEARVVKTDDRFTEVEIDKKAYPYEIRNNRFVFQGKGWEEGMGSCMAFEKGTGHIIANTSDIGWNGHVEPLGGSRLRLSWNLRQKGIKPGDTLVLRNYNRPHPGCVVYRARKTSLNDVSLHQSSGMALLVQRSEDFHMKGGGVMVRKGTGRVHTAGADATHFSNTRGGIVVEKALFEGMMDDAINVHSTCLGVMEVVDSHTLKCKYMHRQAVGFEVFLPGEKIRFINGPTLEPGGTATVKTAVKKNSAEMVITVEEPLPSSVRAGDAVENADFYPSVVFRNNIVRNNRARGSLFTTPERVLVEGNLFDHSSGSAILLAGDAQGWYESGACHEVVIRKNTFINNLTSRYQFTNAIISIYPEVKQLDRQRDYYHRNVLIENNVFKTFDVPLLFAISTDNLKFINNKVIYNDEFKGWGQKPFQFRRCANILIKDNKVLPPRTWTLEDCKLENTPSDQVRFGG</sequence>
<organism>
    <name type="scientific">Akkermansia muciniphila (strain ATCC BAA-835 / DSM 22959 / JCM 33894 / BCRC 81048 / CCUG 64013 / CIP 107961 / Muc)</name>
    <dbReference type="NCBI Taxonomy" id="349741"/>
    <lineage>
        <taxon>Bacteria</taxon>
        <taxon>Pseudomonadati</taxon>
        <taxon>Verrucomicrobiota</taxon>
        <taxon>Verrucomicrobiia</taxon>
        <taxon>Verrucomicrobiales</taxon>
        <taxon>Akkermansiaceae</taxon>
        <taxon>Akkermansia</taxon>
    </lineage>
</organism>
<gene>
    <name type="primary">glaB</name>
    <name type="ordered locus">Amuc_0480</name>
</gene>